<proteinExistence type="evidence at transcript level"/>
<feature type="chain" id="PRO_0000120168" description="Thioredoxin domain-containing protein 9">
    <location>
        <begin position="1"/>
        <end position="226"/>
    </location>
</feature>
<feature type="domain" description="Thioredoxin">
    <location>
        <begin position="75"/>
        <end position="180"/>
    </location>
</feature>
<feature type="modified residue" description="Phosphoserine" evidence="2">
    <location>
        <position position="188"/>
    </location>
</feature>
<feature type="modified residue" description="Phosphoserine" evidence="2">
    <location>
        <position position="221"/>
    </location>
</feature>
<feature type="modified residue" description="Phosphoserine" evidence="2">
    <location>
        <position position="223"/>
    </location>
</feature>
<name>TXND9_RAT</name>
<sequence>MEGNGSIDMFSEVLENQFLQAAKLVENHLDSEIQKLDQIGEDELELLKEKRLAALRKAQQQKQEWLSKGHGEYREIGSERDFFQEVKESEKVVCHFYRDTTFRCKILDRHLAILAKKHLETKFLKPNVEKAPFLCERLRIKVIPTLALLRDGKTQDYIVGFTDLGNTDDFTTETLEWRLGCSDVINYSGNLMEPPFQSQKKFGTNFTKLEKKTIRGKKYDSDSDDD</sequence>
<protein>
    <recommendedName>
        <fullName>Thioredoxin domain-containing protein 9</fullName>
    </recommendedName>
    <alternativeName>
        <fullName>ES cell-related protein</fullName>
    </alternativeName>
</protein>
<reference key="1">
    <citation type="submission" date="2002-04" db="EMBL/GenBank/DDBJ databases">
        <title>Cloning and analysis of up-regulated genes in rat liver.</title>
        <authorList>
            <person name="Li Y."/>
            <person name="Xu C."/>
            <person name="Zhang Y."/>
        </authorList>
    </citation>
    <scope>NUCLEOTIDE SEQUENCE [MRNA]</scope>
</reference>
<comment type="function">
    <text evidence="1">Significantly diminishes the chaperonin TCP1 complex ATPase activity, thus negatively impacts protein folding, including that of actin or tubulin.</text>
</comment>
<comment type="subunit">
    <text evidence="1">Forms ternary complexes with the chaperonin TCP1 complex, spanning the cylindrical chaperonin cavity and contacting at least 2 subunits.</text>
</comment>
<comment type="subcellular location">
    <subcellularLocation>
        <location evidence="3">Cytoplasm</location>
    </subcellularLocation>
    <subcellularLocation>
        <location evidence="3">Nucleus</location>
    </subcellularLocation>
    <subcellularLocation>
        <location evidence="3">Cytoplasm</location>
        <location evidence="3">Cytoskeleton</location>
        <location evidence="3">Microtubule organizing center</location>
        <location evidence="3">Centrosome</location>
    </subcellularLocation>
    <subcellularLocation>
        <location evidence="3">Midbody</location>
    </subcellularLocation>
    <text evidence="3">Co-localizes with beta-tubulin in the centrosome.</text>
</comment>
<comment type="sequence caution" evidence="4">
    <conflict type="erroneous initiation">
        <sequence resource="EMBL-CDS" id="AAM34684"/>
    </conflict>
</comment>
<gene>
    <name type="primary">Txndc9</name>
</gene>
<dbReference type="EMBL" id="AF508022">
    <property type="protein sequence ID" value="AAM34684.1"/>
    <property type="status" value="ALT_INIT"/>
    <property type="molecule type" value="mRNA"/>
</dbReference>
<dbReference type="SMR" id="Q8K581"/>
<dbReference type="FunCoup" id="Q8K581">
    <property type="interactions" value="3026"/>
</dbReference>
<dbReference type="STRING" id="10116.ENSRNOP00000025098"/>
<dbReference type="PhosphoSitePlus" id="Q8K581"/>
<dbReference type="jPOST" id="Q8K581"/>
<dbReference type="PaxDb" id="10116-ENSRNOP00000025098"/>
<dbReference type="UCSC" id="RGD:708355">
    <property type="organism name" value="rat"/>
</dbReference>
<dbReference type="AGR" id="RGD:708355"/>
<dbReference type="RGD" id="708355">
    <property type="gene designation" value="Txndc9"/>
</dbReference>
<dbReference type="eggNOG" id="KOG1672">
    <property type="taxonomic scope" value="Eukaryota"/>
</dbReference>
<dbReference type="InParanoid" id="Q8K581"/>
<dbReference type="PRO" id="PR:Q8K581"/>
<dbReference type="Proteomes" id="UP000002494">
    <property type="component" value="Unplaced"/>
</dbReference>
<dbReference type="GO" id="GO:0005813">
    <property type="term" value="C:centrosome"/>
    <property type="evidence" value="ECO:0000266"/>
    <property type="project" value="RGD"/>
</dbReference>
<dbReference type="GO" id="GO:0005737">
    <property type="term" value="C:cytoplasm"/>
    <property type="evidence" value="ECO:0000266"/>
    <property type="project" value="RGD"/>
</dbReference>
<dbReference type="GO" id="GO:0030496">
    <property type="term" value="C:midbody"/>
    <property type="evidence" value="ECO:0000266"/>
    <property type="project" value="RGD"/>
</dbReference>
<dbReference type="GO" id="GO:0005634">
    <property type="term" value="C:nucleus"/>
    <property type="evidence" value="ECO:0000266"/>
    <property type="project" value="RGD"/>
</dbReference>
<dbReference type="GO" id="GO:0000226">
    <property type="term" value="P:microtubule cytoskeleton organization"/>
    <property type="evidence" value="ECO:0000318"/>
    <property type="project" value="GO_Central"/>
</dbReference>
<dbReference type="CDD" id="cd02989">
    <property type="entry name" value="Phd_like_TxnDC9"/>
    <property type="match status" value="1"/>
</dbReference>
<dbReference type="FunFam" id="3.40.30.10:FF:000141">
    <property type="entry name" value="Thioredoxin domain-containing protein 9"/>
    <property type="match status" value="1"/>
</dbReference>
<dbReference type="Gene3D" id="3.40.30.10">
    <property type="entry name" value="Glutaredoxin"/>
    <property type="match status" value="1"/>
</dbReference>
<dbReference type="InterPro" id="IPR036249">
    <property type="entry name" value="Thioredoxin-like_sf"/>
</dbReference>
<dbReference type="InterPro" id="IPR013766">
    <property type="entry name" value="Thioredoxin_domain"/>
</dbReference>
<dbReference type="PANTHER" id="PTHR21148">
    <property type="entry name" value="THIOREDOXIN DOMAIN-CONTAINING PROTEIN 9"/>
    <property type="match status" value="1"/>
</dbReference>
<dbReference type="Pfam" id="PF00085">
    <property type="entry name" value="Thioredoxin"/>
    <property type="match status" value="1"/>
</dbReference>
<dbReference type="SUPFAM" id="SSF52833">
    <property type="entry name" value="Thioredoxin-like"/>
    <property type="match status" value="1"/>
</dbReference>
<organism>
    <name type="scientific">Rattus norvegicus</name>
    <name type="common">Rat</name>
    <dbReference type="NCBI Taxonomy" id="10116"/>
    <lineage>
        <taxon>Eukaryota</taxon>
        <taxon>Metazoa</taxon>
        <taxon>Chordata</taxon>
        <taxon>Craniata</taxon>
        <taxon>Vertebrata</taxon>
        <taxon>Euteleostomi</taxon>
        <taxon>Mammalia</taxon>
        <taxon>Eutheria</taxon>
        <taxon>Euarchontoglires</taxon>
        <taxon>Glires</taxon>
        <taxon>Rodentia</taxon>
        <taxon>Myomorpha</taxon>
        <taxon>Muroidea</taxon>
        <taxon>Muridae</taxon>
        <taxon>Murinae</taxon>
        <taxon>Rattus</taxon>
    </lineage>
</organism>
<evidence type="ECO:0000250" key="1"/>
<evidence type="ECO:0000250" key="2">
    <source>
        <dbReference type="UniProtKB" id="O14530"/>
    </source>
</evidence>
<evidence type="ECO:0000250" key="3">
    <source>
        <dbReference type="UniProtKB" id="Q9CQ79"/>
    </source>
</evidence>
<evidence type="ECO:0000305" key="4"/>
<accession>Q8K581</accession>
<keyword id="KW-0963">Cytoplasm</keyword>
<keyword id="KW-0206">Cytoskeleton</keyword>
<keyword id="KW-0539">Nucleus</keyword>
<keyword id="KW-0597">Phosphoprotein</keyword>
<keyword id="KW-1185">Reference proteome</keyword>